<dbReference type="EC" id="2.1.1.170" evidence="1"/>
<dbReference type="EMBL" id="CP000084">
    <property type="protein sequence ID" value="AAZ21174.1"/>
    <property type="molecule type" value="Genomic_DNA"/>
</dbReference>
<dbReference type="RefSeq" id="WP_011281644.1">
    <property type="nucleotide sequence ID" value="NC_007205.1"/>
</dbReference>
<dbReference type="SMR" id="Q4FNR5"/>
<dbReference type="STRING" id="335992.SAR11_0352"/>
<dbReference type="GeneID" id="66294850"/>
<dbReference type="KEGG" id="pub:SAR11_0352"/>
<dbReference type="eggNOG" id="COG0357">
    <property type="taxonomic scope" value="Bacteria"/>
</dbReference>
<dbReference type="HOGENOM" id="CLU_065341_1_1_5"/>
<dbReference type="OrthoDB" id="9808773at2"/>
<dbReference type="Proteomes" id="UP000002528">
    <property type="component" value="Chromosome"/>
</dbReference>
<dbReference type="GO" id="GO:0005829">
    <property type="term" value="C:cytosol"/>
    <property type="evidence" value="ECO:0007669"/>
    <property type="project" value="TreeGrafter"/>
</dbReference>
<dbReference type="GO" id="GO:0070043">
    <property type="term" value="F:rRNA (guanine-N7-)-methyltransferase activity"/>
    <property type="evidence" value="ECO:0007669"/>
    <property type="project" value="UniProtKB-UniRule"/>
</dbReference>
<dbReference type="Gene3D" id="3.40.50.150">
    <property type="entry name" value="Vaccinia Virus protein VP39"/>
    <property type="match status" value="1"/>
</dbReference>
<dbReference type="HAMAP" id="MF_00074">
    <property type="entry name" value="16SrRNA_methyltr_G"/>
    <property type="match status" value="1"/>
</dbReference>
<dbReference type="InterPro" id="IPR003682">
    <property type="entry name" value="rRNA_ssu_MeTfrase_G"/>
</dbReference>
<dbReference type="InterPro" id="IPR029063">
    <property type="entry name" value="SAM-dependent_MTases_sf"/>
</dbReference>
<dbReference type="PANTHER" id="PTHR31760">
    <property type="entry name" value="S-ADENOSYL-L-METHIONINE-DEPENDENT METHYLTRANSFERASES SUPERFAMILY PROTEIN"/>
    <property type="match status" value="1"/>
</dbReference>
<dbReference type="PANTHER" id="PTHR31760:SF0">
    <property type="entry name" value="S-ADENOSYL-L-METHIONINE-DEPENDENT METHYLTRANSFERASES SUPERFAMILY PROTEIN"/>
    <property type="match status" value="1"/>
</dbReference>
<dbReference type="Pfam" id="PF02527">
    <property type="entry name" value="GidB"/>
    <property type="match status" value="1"/>
</dbReference>
<dbReference type="PIRSF" id="PIRSF003078">
    <property type="entry name" value="GidB"/>
    <property type="match status" value="1"/>
</dbReference>
<dbReference type="SUPFAM" id="SSF53335">
    <property type="entry name" value="S-adenosyl-L-methionine-dependent methyltransferases"/>
    <property type="match status" value="1"/>
</dbReference>
<protein>
    <recommendedName>
        <fullName evidence="1">Ribosomal RNA small subunit methyltransferase G</fullName>
        <ecNumber evidence="1">2.1.1.170</ecNumber>
    </recommendedName>
    <alternativeName>
        <fullName evidence="1">16S rRNA 7-methylguanosine methyltransferase</fullName>
        <shortName evidence="1">16S rRNA m7G methyltransferase</shortName>
    </alternativeName>
</protein>
<comment type="function">
    <text evidence="1">Specifically methylates the N7 position of guanine in position 527 of 16S rRNA.</text>
</comment>
<comment type="catalytic activity">
    <reaction evidence="1">
        <text>guanosine(527) in 16S rRNA + S-adenosyl-L-methionine = N(7)-methylguanosine(527) in 16S rRNA + S-adenosyl-L-homocysteine</text>
        <dbReference type="Rhea" id="RHEA:42732"/>
        <dbReference type="Rhea" id="RHEA-COMP:10209"/>
        <dbReference type="Rhea" id="RHEA-COMP:10210"/>
        <dbReference type="ChEBI" id="CHEBI:57856"/>
        <dbReference type="ChEBI" id="CHEBI:59789"/>
        <dbReference type="ChEBI" id="CHEBI:74269"/>
        <dbReference type="ChEBI" id="CHEBI:74480"/>
        <dbReference type="EC" id="2.1.1.170"/>
    </reaction>
</comment>
<comment type="subcellular location">
    <subcellularLocation>
        <location evidence="1">Cytoplasm</location>
    </subcellularLocation>
</comment>
<comment type="similarity">
    <text evidence="1">Belongs to the methyltransferase superfamily. RNA methyltransferase RsmG family.</text>
</comment>
<proteinExistence type="inferred from homology"/>
<name>RSMG_PELUB</name>
<organism>
    <name type="scientific">Pelagibacter ubique (strain HTCC1062)</name>
    <dbReference type="NCBI Taxonomy" id="335992"/>
    <lineage>
        <taxon>Bacteria</taxon>
        <taxon>Pseudomonadati</taxon>
        <taxon>Pseudomonadota</taxon>
        <taxon>Alphaproteobacteria</taxon>
        <taxon>Candidatus Pelagibacterales</taxon>
        <taxon>Candidatus Pelagibacteraceae</taxon>
        <taxon>Candidatus Pelagibacter</taxon>
    </lineage>
</organism>
<accession>Q4FNR5</accession>
<evidence type="ECO:0000255" key="1">
    <source>
        <dbReference type="HAMAP-Rule" id="MF_00074"/>
    </source>
</evidence>
<sequence>MEEIFKNYPLLKNQNVPRETLIEFDLFISMLQEENEKINIISKETAKNEVIRERHIVDSAQIIEFVDLNSNIITDIGSGGGMPGIIISIMIKNQKNLAKVHLYEKSHHKSSFLRKVSRDLKLNTEVMQENIFEAEKLDSGTIMARAFKPLPIILDLVYKNFNSYKNLIVFMGKNGEKVLEETLMNWDFDFEKKKSITSEDSFLLNIKKIKKKN</sequence>
<feature type="chain" id="PRO_0000342932" description="Ribosomal RNA small subunit methyltransferase G">
    <location>
        <begin position="1"/>
        <end position="213"/>
    </location>
</feature>
<feature type="binding site" evidence="1">
    <location>
        <position position="77"/>
    </location>
    <ligand>
        <name>S-adenosyl-L-methionine</name>
        <dbReference type="ChEBI" id="CHEBI:59789"/>
    </ligand>
</feature>
<feature type="binding site" evidence="1">
    <location>
        <position position="82"/>
    </location>
    <ligand>
        <name>S-adenosyl-L-methionine</name>
        <dbReference type="ChEBI" id="CHEBI:59789"/>
    </ligand>
</feature>
<feature type="binding site" evidence="1">
    <location>
        <begin position="104"/>
        <end position="106"/>
    </location>
    <ligand>
        <name>S-adenosyl-L-methionine</name>
        <dbReference type="ChEBI" id="CHEBI:59789"/>
    </ligand>
</feature>
<feature type="binding site" evidence="1">
    <location>
        <position position="145"/>
    </location>
    <ligand>
        <name>S-adenosyl-L-methionine</name>
        <dbReference type="ChEBI" id="CHEBI:59789"/>
    </ligand>
</feature>
<gene>
    <name evidence="1" type="primary">rsmG</name>
    <name type="ordered locus">SAR11_0352</name>
</gene>
<keyword id="KW-0963">Cytoplasm</keyword>
<keyword id="KW-0489">Methyltransferase</keyword>
<keyword id="KW-1185">Reference proteome</keyword>
<keyword id="KW-0698">rRNA processing</keyword>
<keyword id="KW-0949">S-adenosyl-L-methionine</keyword>
<keyword id="KW-0808">Transferase</keyword>
<reference key="1">
    <citation type="journal article" date="2005" name="Science">
        <title>Genome streamlining in a cosmopolitan oceanic bacterium.</title>
        <authorList>
            <person name="Giovannoni S.J."/>
            <person name="Tripp H.J."/>
            <person name="Givan S."/>
            <person name="Podar M."/>
            <person name="Vergin K.L."/>
            <person name="Baptista D."/>
            <person name="Bibbs L."/>
            <person name="Eads J."/>
            <person name="Richardson T.H."/>
            <person name="Noordewier M."/>
            <person name="Rappe M.S."/>
            <person name="Short J.M."/>
            <person name="Carrington J.C."/>
            <person name="Mathur E.J."/>
        </authorList>
    </citation>
    <scope>NUCLEOTIDE SEQUENCE [LARGE SCALE GENOMIC DNA]</scope>
    <source>
        <strain>HTCC1062</strain>
    </source>
</reference>